<proteinExistence type="inferred from homology"/>
<evidence type="ECO:0000255" key="1">
    <source>
        <dbReference type="HAMAP-Rule" id="MF_00816"/>
    </source>
</evidence>
<feature type="chain" id="PRO_1000199580" description="UPF0352 protein VSAL_I1058">
    <location>
        <begin position="1"/>
        <end position="75"/>
    </location>
</feature>
<organism>
    <name type="scientific">Aliivibrio salmonicida (strain LFI1238)</name>
    <name type="common">Vibrio salmonicida (strain LFI1238)</name>
    <dbReference type="NCBI Taxonomy" id="316275"/>
    <lineage>
        <taxon>Bacteria</taxon>
        <taxon>Pseudomonadati</taxon>
        <taxon>Pseudomonadota</taxon>
        <taxon>Gammaproteobacteria</taxon>
        <taxon>Vibrionales</taxon>
        <taxon>Vibrionaceae</taxon>
        <taxon>Aliivibrio</taxon>
    </lineage>
</organism>
<name>Y1058_ALISL</name>
<sequence>MAITSKYSNKQIEQMLTEMVDVLDKHRAPADLSLMLVGNIATNVLNQEVPAEQRKIIAEKFAQALLSSLDIPKTH</sequence>
<dbReference type="EMBL" id="FM178379">
    <property type="protein sequence ID" value="CAQ78743.1"/>
    <property type="molecule type" value="Genomic_DNA"/>
</dbReference>
<dbReference type="RefSeq" id="WP_012549815.1">
    <property type="nucleotide sequence ID" value="NC_011312.1"/>
</dbReference>
<dbReference type="SMR" id="B6EIU9"/>
<dbReference type="KEGG" id="vsa:VSAL_I1058"/>
<dbReference type="eggNOG" id="COG3082">
    <property type="taxonomic scope" value="Bacteria"/>
</dbReference>
<dbReference type="HOGENOM" id="CLU_175457_0_0_6"/>
<dbReference type="Proteomes" id="UP000001730">
    <property type="component" value="Chromosome 1"/>
</dbReference>
<dbReference type="Gene3D" id="1.10.3390.10">
    <property type="entry name" value="YejL-like"/>
    <property type="match status" value="1"/>
</dbReference>
<dbReference type="HAMAP" id="MF_00816">
    <property type="entry name" value="UPF0352"/>
    <property type="match status" value="1"/>
</dbReference>
<dbReference type="InterPro" id="IPR009857">
    <property type="entry name" value="UPF0352"/>
</dbReference>
<dbReference type="InterPro" id="IPR023202">
    <property type="entry name" value="YejL_sf"/>
</dbReference>
<dbReference type="NCBIfam" id="NF010242">
    <property type="entry name" value="PRK13689.1"/>
    <property type="match status" value="1"/>
</dbReference>
<dbReference type="Pfam" id="PF07208">
    <property type="entry name" value="DUF1414"/>
    <property type="match status" value="1"/>
</dbReference>
<dbReference type="PIRSF" id="PIRSF006188">
    <property type="entry name" value="UCP006188"/>
    <property type="match status" value="1"/>
</dbReference>
<dbReference type="SUPFAM" id="SSF158651">
    <property type="entry name" value="YejL-like"/>
    <property type="match status" value="1"/>
</dbReference>
<protein>
    <recommendedName>
        <fullName evidence="1">UPF0352 protein VSAL_I1058</fullName>
    </recommendedName>
</protein>
<comment type="similarity">
    <text evidence="1">Belongs to the UPF0352 family.</text>
</comment>
<accession>B6EIU9</accession>
<reference key="1">
    <citation type="journal article" date="2008" name="BMC Genomics">
        <title>The genome sequence of the fish pathogen Aliivibrio salmonicida strain LFI1238 shows extensive evidence of gene decay.</title>
        <authorList>
            <person name="Hjerde E."/>
            <person name="Lorentzen M.S."/>
            <person name="Holden M.T."/>
            <person name="Seeger K."/>
            <person name="Paulsen S."/>
            <person name="Bason N."/>
            <person name="Churcher C."/>
            <person name="Harris D."/>
            <person name="Norbertczak H."/>
            <person name="Quail M.A."/>
            <person name="Sanders S."/>
            <person name="Thurston S."/>
            <person name="Parkhill J."/>
            <person name="Willassen N.P."/>
            <person name="Thomson N.R."/>
        </authorList>
    </citation>
    <scope>NUCLEOTIDE SEQUENCE [LARGE SCALE GENOMIC DNA]</scope>
    <source>
        <strain>LFI1238</strain>
    </source>
</reference>
<gene>
    <name type="ordered locus">VSAL_I1058</name>
</gene>